<proteinExistence type="inferred from homology"/>
<dbReference type="EMBL" id="AF036708">
    <property type="protein sequence ID" value="AAB95387.1"/>
    <property type="molecule type" value="Genomic_DNA"/>
</dbReference>
<dbReference type="EMBL" id="AE015450">
    <property type="protein sequence ID" value="AAP56401.1"/>
    <property type="molecule type" value="Genomic_DNA"/>
</dbReference>
<dbReference type="RefSeq" id="WP_011113280.1">
    <property type="nucleotide sequence ID" value="NC_004829.2"/>
</dbReference>
<dbReference type="SMR" id="O52332"/>
<dbReference type="GeneID" id="93509869"/>
<dbReference type="KEGG" id="mga:MGA_0707"/>
<dbReference type="PATRIC" id="fig|233150.7.peg.55"/>
<dbReference type="HOGENOM" id="CLU_044142_4_1_14"/>
<dbReference type="OrthoDB" id="9806135at2"/>
<dbReference type="Proteomes" id="UP000001418">
    <property type="component" value="Chromosome"/>
</dbReference>
<dbReference type="GO" id="GO:0022625">
    <property type="term" value="C:cytosolic large ribosomal subunit"/>
    <property type="evidence" value="ECO:0007669"/>
    <property type="project" value="TreeGrafter"/>
</dbReference>
<dbReference type="GO" id="GO:0019843">
    <property type="term" value="F:rRNA binding"/>
    <property type="evidence" value="ECO:0007669"/>
    <property type="project" value="UniProtKB-UniRule"/>
</dbReference>
<dbReference type="GO" id="GO:0003735">
    <property type="term" value="F:structural constituent of ribosome"/>
    <property type="evidence" value="ECO:0007669"/>
    <property type="project" value="InterPro"/>
</dbReference>
<dbReference type="GO" id="GO:0006412">
    <property type="term" value="P:translation"/>
    <property type="evidence" value="ECO:0007669"/>
    <property type="project" value="UniProtKB-UniRule"/>
</dbReference>
<dbReference type="FunFam" id="3.30.160.810:FF:000001">
    <property type="entry name" value="50S ribosomal protein L3"/>
    <property type="match status" value="1"/>
</dbReference>
<dbReference type="Gene3D" id="3.30.160.810">
    <property type="match status" value="1"/>
</dbReference>
<dbReference type="Gene3D" id="2.40.30.10">
    <property type="entry name" value="Translation factors"/>
    <property type="match status" value="1"/>
</dbReference>
<dbReference type="HAMAP" id="MF_01325_B">
    <property type="entry name" value="Ribosomal_uL3_B"/>
    <property type="match status" value="1"/>
</dbReference>
<dbReference type="InterPro" id="IPR000597">
    <property type="entry name" value="Ribosomal_uL3"/>
</dbReference>
<dbReference type="InterPro" id="IPR019927">
    <property type="entry name" value="Ribosomal_uL3_bac/org-type"/>
</dbReference>
<dbReference type="InterPro" id="IPR019926">
    <property type="entry name" value="Ribosomal_uL3_CS"/>
</dbReference>
<dbReference type="InterPro" id="IPR009000">
    <property type="entry name" value="Transl_B-barrel_sf"/>
</dbReference>
<dbReference type="NCBIfam" id="TIGR03625">
    <property type="entry name" value="L3_bact"/>
    <property type="match status" value="1"/>
</dbReference>
<dbReference type="PANTHER" id="PTHR11229">
    <property type="entry name" value="50S RIBOSOMAL PROTEIN L3"/>
    <property type="match status" value="1"/>
</dbReference>
<dbReference type="PANTHER" id="PTHR11229:SF16">
    <property type="entry name" value="LARGE RIBOSOMAL SUBUNIT PROTEIN UL3C"/>
    <property type="match status" value="1"/>
</dbReference>
<dbReference type="Pfam" id="PF00297">
    <property type="entry name" value="Ribosomal_L3"/>
    <property type="match status" value="1"/>
</dbReference>
<dbReference type="SUPFAM" id="SSF50447">
    <property type="entry name" value="Translation proteins"/>
    <property type="match status" value="1"/>
</dbReference>
<dbReference type="PROSITE" id="PS00474">
    <property type="entry name" value="RIBOSOMAL_L3"/>
    <property type="match status" value="1"/>
</dbReference>
<evidence type="ECO:0000255" key="1">
    <source>
        <dbReference type="HAMAP-Rule" id="MF_01325"/>
    </source>
</evidence>
<evidence type="ECO:0000305" key="2"/>
<sequence>MKGIFGTKVGMTQVFEENGRLIPVTLVRVEPNQVVSVKTKEKDGYDAVQLGFNQTDEKNLNKPQLGHFKKANTNNYKYLEEVRGMVGYKIGDLLKVEELFQEGQVVDVQARTKGRGFTGAIKRWNFKIGSKGHGAGYPHRFQGSVQAGRGGSQAQRVMKGKKMSGHYGNELVTIQNLSIVGFLPEVSSVMISGAIPGANNSKVRITTSKKNPNTVLTYKLIINKKASKPAGEQAQE</sequence>
<gene>
    <name evidence="1" type="primary">rplC</name>
    <name evidence="1" type="synonym">rpl3</name>
    <name type="ordered locus">MYCGA0510</name>
    <name type="ORF">MGA_0707</name>
</gene>
<reference key="1">
    <citation type="journal article" date="2000" name="Mol. Biol. (Mosk.)">
        <title>Determination and analysis of the nucleotide sequence of a segment of a Mycoplasma gallisepticum strain A5969 chromosome, containing operons S10 and rrn23-5.</title>
        <authorList>
            <person name="Skamrov A.V."/>
            <person name="Gol'dman M.A."/>
            <person name="Feoktistova E.S."/>
            <person name="Bibilashvili R.S."/>
        </authorList>
    </citation>
    <scope>NUCLEOTIDE SEQUENCE [GENOMIC DNA]</scope>
    <source>
        <strain>A5969Var.B</strain>
    </source>
</reference>
<reference key="2">
    <citation type="journal article" date="2003" name="Microbiology">
        <title>The complete genome sequence of the avian pathogen Mycoplasma gallisepticum strain R(low).</title>
        <authorList>
            <person name="Papazisi L."/>
            <person name="Gorton T.S."/>
            <person name="Kutish G."/>
            <person name="Markham P.F."/>
            <person name="Browning G.F."/>
            <person name="Nguyen D.K."/>
            <person name="Swartzell S."/>
            <person name="Madan A."/>
            <person name="Mahairas G."/>
            <person name="Geary S.J."/>
        </authorList>
    </citation>
    <scope>NUCLEOTIDE SEQUENCE [LARGE SCALE GENOMIC DNA]</scope>
    <source>
        <strain>R(low / passage 15 / clone 2)</strain>
    </source>
</reference>
<protein>
    <recommendedName>
        <fullName evidence="1">Large ribosomal subunit protein uL3</fullName>
    </recommendedName>
    <alternativeName>
        <fullName evidence="2">50S ribosomal protein L3</fullName>
    </alternativeName>
</protein>
<organism>
    <name type="scientific">Mycoplasmoides gallisepticum (strain R(low / passage 15 / clone 2))</name>
    <name type="common">Mycoplasma gallisepticum</name>
    <dbReference type="NCBI Taxonomy" id="710127"/>
    <lineage>
        <taxon>Bacteria</taxon>
        <taxon>Bacillati</taxon>
        <taxon>Mycoplasmatota</taxon>
        <taxon>Mycoplasmoidales</taxon>
        <taxon>Mycoplasmoidaceae</taxon>
        <taxon>Mycoplasmoides</taxon>
    </lineage>
</organism>
<comment type="function">
    <text evidence="1">One of the primary rRNA binding proteins, it binds directly near the 3'-end of the 23S rRNA, where it nucleates assembly of the 50S subunit.</text>
</comment>
<comment type="subunit">
    <text evidence="1">Part of the 50S ribosomal subunit. Forms a cluster with proteins L14 and L19.</text>
</comment>
<comment type="similarity">
    <text evidence="1">Belongs to the universal ribosomal protein uL3 family.</text>
</comment>
<keyword id="KW-1185">Reference proteome</keyword>
<keyword id="KW-0687">Ribonucleoprotein</keyword>
<keyword id="KW-0689">Ribosomal protein</keyword>
<keyword id="KW-0694">RNA-binding</keyword>
<keyword id="KW-0699">rRNA-binding</keyword>
<feature type="chain" id="PRO_0000077119" description="Large ribosomal subunit protein uL3">
    <location>
        <begin position="1"/>
        <end position="236"/>
    </location>
</feature>
<feature type="sequence conflict" description="In Ref. 1; AAB95387." evidence="2" ref="1">
    <original>Q</original>
    <variation>E</variation>
    <location>
        <position position="64"/>
    </location>
</feature>
<feature type="sequence conflict" description="In Ref. 1; AAB95387." evidence="2" ref="1">
    <original>I</original>
    <variation>V</variation>
    <location>
        <position position="90"/>
    </location>
</feature>
<name>RL3_MYCGA</name>
<accession>O52332</accession>